<protein>
    <recommendedName>
        <fullName evidence="1">Na(+)-translocating NADH-quinone reductase subunit C</fullName>
        <shortName evidence="1">Na(+)-NQR subunit C</shortName>
        <shortName evidence="1">Na(+)-translocating NQR subunit C</shortName>
        <ecNumber evidence="1">7.2.1.1</ecNumber>
    </recommendedName>
    <alternativeName>
        <fullName evidence="1">NQR complex subunit C</fullName>
    </alternativeName>
    <alternativeName>
        <fullName evidence="1">NQR-1 subunit C</fullName>
    </alternativeName>
</protein>
<sequence>MSKGSSKHTVRINQTWYIVSFILGLSLFAGVLLSTIYYVLSPIQEQAATFDRNKQMLLAAHILDFKGRFQIQEKKEWVPATFDKKTQLLEVATKKVSEVSYPELELYAERFVRPLLTDAQGKVFSFEEKNLNPIEFFEKYQESPPCQQSPLPFYVILENTSRTENMSGADVAKDLSTVQALIFPISGFGLWGPIHGYLGVKNDGDTVLGTAWYQQGETPGLGANITNPEWQEQFYGKKIFLQDSSGTTNFATTDLGLEVVKGSVRTTLGDSPKALSAIDGISGATLTCNGVTEAYVQSLACYRQLLINFSNLTHEKKTGE</sequence>
<keyword id="KW-0997">Cell inner membrane</keyword>
<keyword id="KW-1003">Cell membrane</keyword>
<keyword id="KW-0285">Flavoprotein</keyword>
<keyword id="KW-0288">FMN</keyword>
<keyword id="KW-0406">Ion transport</keyword>
<keyword id="KW-0472">Membrane</keyword>
<keyword id="KW-0520">NAD</keyword>
<keyword id="KW-0597">Phosphoprotein</keyword>
<keyword id="KW-0915">Sodium</keyword>
<keyword id="KW-0739">Sodium transport</keyword>
<keyword id="KW-1278">Translocase</keyword>
<keyword id="KW-0812">Transmembrane</keyword>
<keyword id="KW-1133">Transmembrane helix</keyword>
<keyword id="KW-0813">Transport</keyword>
<keyword id="KW-0830">Ubiquinone</keyword>
<reference key="1">
    <citation type="journal article" date="1999" name="Nat. Genet.">
        <title>Comparative genomes of Chlamydia pneumoniae and C. trachomatis.</title>
        <authorList>
            <person name="Kalman S."/>
            <person name="Mitchell W.P."/>
            <person name="Marathe R."/>
            <person name="Lammel C.J."/>
            <person name="Fan J."/>
            <person name="Hyman R.W."/>
            <person name="Olinger L."/>
            <person name="Grimwood J."/>
            <person name="Davis R.W."/>
            <person name="Stephens R.S."/>
        </authorList>
    </citation>
    <scope>NUCLEOTIDE SEQUENCE [LARGE SCALE GENOMIC DNA]</scope>
    <source>
        <strain>CWL029</strain>
    </source>
</reference>
<reference key="2">
    <citation type="journal article" date="2000" name="Nucleic Acids Res.">
        <title>Genome sequences of Chlamydia trachomatis MoPn and Chlamydia pneumoniae AR39.</title>
        <authorList>
            <person name="Read T.D."/>
            <person name="Brunham R.C."/>
            <person name="Shen C."/>
            <person name="Gill S.R."/>
            <person name="Heidelberg J.F."/>
            <person name="White O."/>
            <person name="Hickey E.K."/>
            <person name="Peterson J.D."/>
            <person name="Utterback T.R."/>
            <person name="Berry K.J."/>
            <person name="Bass S."/>
            <person name="Linher K.D."/>
            <person name="Weidman J.F."/>
            <person name="Khouri H.M."/>
            <person name="Craven B."/>
            <person name="Bowman C."/>
            <person name="Dodson R.J."/>
            <person name="Gwinn M.L."/>
            <person name="Nelson W.C."/>
            <person name="DeBoy R.T."/>
            <person name="Kolonay J.F."/>
            <person name="McClarty G."/>
            <person name="Salzberg S.L."/>
            <person name="Eisen J.A."/>
            <person name="Fraser C.M."/>
        </authorList>
    </citation>
    <scope>NUCLEOTIDE SEQUENCE [LARGE SCALE GENOMIC DNA]</scope>
    <source>
        <strain>AR39</strain>
    </source>
</reference>
<reference key="3">
    <citation type="journal article" date="2000" name="Nucleic Acids Res.">
        <title>Comparison of whole genome sequences of Chlamydia pneumoniae J138 from Japan and CWL029 from USA.</title>
        <authorList>
            <person name="Shirai M."/>
            <person name="Hirakawa H."/>
            <person name="Kimoto M."/>
            <person name="Tabuchi M."/>
            <person name="Kishi F."/>
            <person name="Ouchi K."/>
            <person name="Shiba T."/>
            <person name="Ishii K."/>
            <person name="Hattori M."/>
            <person name="Kuhara S."/>
            <person name="Nakazawa T."/>
        </authorList>
    </citation>
    <scope>NUCLEOTIDE SEQUENCE [LARGE SCALE GENOMIC DNA]</scope>
    <source>
        <strain>J138</strain>
    </source>
</reference>
<reference key="4">
    <citation type="submission" date="2002-05" db="EMBL/GenBank/DDBJ databases">
        <title>The genome sequence of Chlamydia pneumoniae TW183 and comparison with other Chlamydia strains based on whole genome sequence analysis.</title>
        <authorList>
            <person name="Geng M.M."/>
            <person name="Schuhmacher A."/>
            <person name="Muehldorfer I."/>
            <person name="Bensch K.W."/>
            <person name="Schaefer K.P."/>
            <person name="Schneider S."/>
            <person name="Pohl T."/>
            <person name="Essig A."/>
            <person name="Marre R."/>
            <person name="Melchers K."/>
        </authorList>
    </citation>
    <scope>NUCLEOTIDE SEQUENCE [LARGE SCALE GENOMIC DNA]</scope>
    <source>
        <strain>TW-183</strain>
    </source>
</reference>
<organism>
    <name type="scientific">Chlamydia pneumoniae</name>
    <name type="common">Chlamydophila pneumoniae</name>
    <dbReference type="NCBI Taxonomy" id="83558"/>
    <lineage>
        <taxon>Bacteria</taxon>
        <taxon>Pseudomonadati</taxon>
        <taxon>Chlamydiota</taxon>
        <taxon>Chlamydiia</taxon>
        <taxon>Chlamydiales</taxon>
        <taxon>Chlamydiaceae</taxon>
        <taxon>Chlamydia/Chlamydophila group</taxon>
        <taxon>Chlamydia</taxon>
    </lineage>
</organism>
<comment type="function">
    <text evidence="1">NQR complex catalyzes the reduction of ubiquinone-1 to ubiquinol by two successive reactions, coupled with the transport of Na(+) ions from the cytoplasm to the periplasm. NqrA to NqrE are probably involved in the second step, the conversion of ubisemiquinone to ubiquinol.</text>
</comment>
<comment type="catalytic activity">
    <reaction evidence="1">
        <text>a ubiquinone + n Na(+)(in) + NADH + H(+) = a ubiquinol + n Na(+)(out) + NAD(+)</text>
        <dbReference type="Rhea" id="RHEA:47748"/>
        <dbReference type="Rhea" id="RHEA-COMP:9565"/>
        <dbReference type="Rhea" id="RHEA-COMP:9566"/>
        <dbReference type="ChEBI" id="CHEBI:15378"/>
        <dbReference type="ChEBI" id="CHEBI:16389"/>
        <dbReference type="ChEBI" id="CHEBI:17976"/>
        <dbReference type="ChEBI" id="CHEBI:29101"/>
        <dbReference type="ChEBI" id="CHEBI:57540"/>
        <dbReference type="ChEBI" id="CHEBI:57945"/>
        <dbReference type="EC" id="7.2.1.1"/>
    </reaction>
</comment>
<comment type="cofactor">
    <cofactor evidence="1">
        <name>FMN</name>
        <dbReference type="ChEBI" id="CHEBI:58210"/>
    </cofactor>
</comment>
<comment type="subunit">
    <text evidence="1">Composed of six subunits; NqrA, NqrB, NqrC, NqrD, NqrE and NqrF.</text>
</comment>
<comment type="subcellular location">
    <subcellularLocation>
        <location evidence="1">Cell inner membrane</location>
        <topology evidence="1">Single-pass membrane protein</topology>
    </subcellularLocation>
</comment>
<comment type="similarity">
    <text evidence="1">Belongs to the NqrC family.</text>
</comment>
<dbReference type="EC" id="7.2.1.1" evidence="1"/>
<dbReference type="EMBL" id="AE001363">
    <property type="protein sequence ID" value="AAD18572.1"/>
    <property type="molecule type" value="Genomic_DNA"/>
</dbReference>
<dbReference type="EMBL" id="AE002161">
    <property type="protein sequence ID" value="AAF38180.1"/>
    <property type="molecule type" value="Genomic_DNA"/>
</dbReference>
<dbReference type="EMBL" id="BA000008">
    <property type="protein sequence ID" value="BAA98636.1"/>
    <property type="molecule type" value="Genomic_DNA"/>
</dbReference>
<dbReference type="EMBL" id="AE009440">
    <property type="protein sequence ID" value="AAP98375.1"/>
    <property type="molecule type" value="Genomic_DNA"/>
</dbReference>
<dbReference type="PIR" id="B86544">
    <property type="entry name" value="B86544"/>
</dbReference>
<dbReference type="PIR" id="F72078">
    <property type="entry name" value="F72078"/>
</dbReference>
<dbReference type="RefSeq" id="NP_224628.1">
    <property type="nucleotide sequence ID" value="NC_000922.1"/>
</dbReference>
<dbReference type="RefSeq" id="WP_010883071.1">
    <property type="nucleotide sequence ID" value="NZ_LN847257.1"/>
</dbReference>
<dbReference type="SMR" id="Q9Z8B5"/>
<dbReference type="STRING" id="406984.CPK_ORF00940"/>
<dbReference type="GeneID" id="45050475"/>
<dbReference type="KEGG" id="cpa:CP_0325"/>
<dbReference type="KEGG" id="cpj:nqr3"/>
<dbReference type="KEGG" id="cpn:CPn_0428"/>
<dbReference type="KEGG" id="cpt:CpB0444"/>
<dbReference type="PATRIC" id="fig|115713.3.peg.475"/>
<dbReference type="eggNOG" id="COG2869">
    <property type="taxonomic scope" value="Bacteria"/>
</dbReference>
<dbReference type="HOGENOM" id="CLU_870677_0_0_0"/>
<dbReference type="OrthoDB" id="9794010at2"/>
<dbReference type="Proteomes" id="UP000000583">
    <property type="component" value="Chromosome"/>
</dbReference>
<dbReference type="Proteomes" id="UP000000801">
    <property type="component" value="Chromosome"/>
</dbReference>
<dbReference type="GO" id="GO:0005886">
    <property type="term" value="C:plasma membrane"/>
    <property type="evidence" value="ECO:0007669"/>
    <property type="project" value="UniProtKB-SubCell"/>
</dbReference>
<dbReference type="GO" id="GO:0010181">
    <property type="term" value="F:FMN binding"/>
    <property type="evidence" value="ECO:0007669"/>
    <property type="project" value="UniProtKB-UniRule"/>
</dbReference>
<dbReference type="GO" id="GO:0016655">
    <property type="term" value="F:oxidoreductase activity, acting on NAD(P)H, quinone or similar compound as acceptor"/>
    <property type="evidence" value="ECO:0007669"/>
    <property type="project" value="UniProtKB-UniRule"/>
</dbReference>
<dbReference type="GO" id="GO:0006814">
    <property type="term" value="P:sodium ion transport"/>
    <property type="evidence" value="ECO:0007669"/>
    <property type="project" value="UniProtKB-UniRule"/>
</dbReference>
<dbReference type="HAMAP" id="MF_00427">
    <property type="entry name" value="NqrC"/>
    <property type="match status" value="1"/>
</dbReference>
<dbReference type="InterPro" id="IPR007329">
    <property type="entry name" value="FMN-bd"/>
</dbReference>
<dbReference type="InterPro" id="IPR010204">
    <property type="entry name" value="NqrC"/>
</dbReference>
<dbReference type="NCBIfam" id="TIGR01938">
    <property type="entry name" value="nqrC"/>
    <property type="match status" value="1"/>
</dbReference>
<dbReference type="NCBIfam" id="NF003754">
    <property type="entry name" value="PRK05346.2-5"/>
    <property type="match status" value="1"/>
</dbReference>
<dbReference type="PANTHER" id="PTHR37838">
    <property type="entry name" value="NA(+)-TRANSLOCATING NADH-QUINONE REDUCTASE SUBUNIT C"/>
    <property type="match status" value="1"/>
</dbReference>
<dbReference type="PANTHER" id="PTHR37838:SF1">
    <property type="entry name" value="NA(+)-TRANSLOCATING NADH-QUINONE REDUCTASE SUBUNIT C"/>
    <property type="match status" value="1"/>
</dbReference>
<dbReference type="Pfam" id="PF04205">
    <property type="entry name" value="FMN_bind"/>
    <property type="match status" value="1"/>
</dbReference>
<dbReference type="PIRSF" id="PIRSF009437">
    <property type="entry name" value="NQR-1_subunit_C"/>
    <property type="match status" value="1"/>
</dbReference>
<dbReference type="SMART" id="SM00900">
    <property type="entry name" value="FMN_bind"/>
    <property type="match status" value="1"/>
</dbReference>
<proteinExistence type="inferred from homology"/>
<evidence type="ECO:0000255" key="1">
    <source>
        <dbReference type="HAMAP-Rule" id="MF_00427"/>
    </source>
</evidence>
<name>NQRC_CHLPN</name>
<feature type="chain" id="PRO_0000214213" description="Na(+)-translocating NADH-quinone reductase subunit C">
    <location>
        <begin position="1"/>
        <end position="320"/>
    </location>
</feature>
<feature type="transmembrane region" description="Helical" evidence="1">
    <location>
        <begin position="16"/>
        <end position="36"/>
    </location>
</feature>
<feature type="modified residue" description="FMN phosphoryl threonine" evidence="1">
    <location>
        <position position="285"/>
    </location>
</feature>
<accession>Q9Z8B5</accession>
<gene>
    <name evidence="1" type="primary">nqrC</name>
    <name type="synonym">nqr3</name>
    <name type="ordered locus">CPn_0428</name>
    <name type="ordered locus">CP_0325</name>
    <name type="ordered locus">CpB0444</name>
</gene>